<feature type="chain" id="PRO_0000305721" description="Mediator of RNA polymerase II transcription subunit 31">
    <location>
        <begin position="1"/>
        <end position="152"/>
    </location>
</feature>
<feature type="region of interest" description="Disordered" evidence="2">
    <location>
        <begin position="126"/>
        <end position="152"/>
    </location>
</feature>
<feature type="compositionally biased region" description="Basic and acidic residues" evidence="2">
    <location>
        <begin position="126"/>
        <end position="144"/>
    </location>
</feature>
<dbReference type="EMBL" id="GG704916">
    <property type="protein sequence ID" value="EAS32693.3"/>
    <property type="molecule type" value="Genomic_DNA"/>
</dbReference>
<dbReference type="RefSeq" id="XP_001244276.1">
    <property type="nucleotide sequence ID" value="XM_001244275.2"/>
</dbReference>
<dbReference type="STRING" id="246410.Q1E146"/>
<dbReference type="GeneID" id="4563334"/>
<dbReference type="KEGG" id="cim:CIMG_03717"/>
<dbReference type="VEuPathDB" id="FungiDB:CIMG_03717"/>
<dbReference type="InParanoid" id="Q1E146"/>
<dbReference type="OMA" id="NPHYISH"/>
<dbReference type="OrthoDB" id="10257739at2759"/>
<dbReference type="Proteomes" id="UP000001261">
    <property type="component" value="Unassembled WGS sequence"/>
</dbReference>
<dbReference type="GO" id="GO:0016592">
    <property type="term" value="C:mediator complex"/>
    <property type="evidence" value="ECO:0007669"/>
    <property type="project" value="InterPro"/>
</dbReference>
<dbReference type="GO" id="GO:0003712">
    <property type="term" value="F:transcription coregulator activity"/>
    <property type="evidence" value="ECO:0007669"/>
    <property type="project" value="InterPro"/>
</dbReference>
<dbReference type="GO" id="GO:0006355">
    <property type="term" value="P:regulation of DNA-templated transcription"/>
    <property type="evidence" value="ECO:0007669"/>
    <property type="project" value="InterPro"/>
</dbReference>
<dbReference type="FunFam" id="1.10.10.1340:FF:000002">
    <property type="entry name" value="Mediator of RNA polymerase II transcription subunit 31"/>
    <property type="match status" value="1"/>
</dbReference>
<dbReference type="Gene3D" id="1.10.10.1340">
    <property type="entry name" value="Mediator of RNA polymerase II, submodule Med31 (Soh1)"/>
    <property type="match status" value="1"/>
</dbReference>
<dbReference type="InterPro" id="IPR038089">
    <property type="entry name" value="Med31_sf"/>
</dbReference>
<dbReference type="InterPro" id="IPR008831">
    <property type="entry name" value="Mediator_Med31"/>
</dbReference>
<dbReference type="PANTHER" id="PTHR13186">
    <property type="entry name" value="MEDIATOR OF RNA POLYMERASE II TRANSCRIPTION SUBUNIT 31"/>
    <property type="match status" value="1"/>
</dbReference>
<dbReference type="Pfam" id="PF05669">
    <property type="entry name" value="Med31"/>
    <property type="match status" value="1"/>
</dbReference>
<proteinExistence type="inferred from homology"/>
<organism>
    <name type="scientific">Coccidioides immitis (strain RS)</name>
    <name type="common">Valley fever fungus</name>
    <dbReference type="NCBI Taxonomy" id="246410"/>
    <lineage>
        <taxon>Eukaryota</taxon>
        <taxon>Fungi</taxon>
        <taxon>Dikarya</taxon>
        <taxon>Ascomycota</taxon>
        <taxon>Pezizomycotina</taxon>
        <taxon>Eurotiomycetes</taxon>
        <taxon>Eurotiomycetidae</taxon>
        <taxon>Onygenales</taxon>
        <taxon>Onygenaceae</taxon>
        <taxon>Coccidioides</taxon>
    </lineage>
</organism>
<keyword id="KW-0010">Activator</keyword>
<keyword id="KW-0539">Nucleus</keyword>
<keyword id="KW-1185">Reference proteome</keyword>
<keyword id="KW-0804">Transcription</keyword>
<keyword id="KW-0805">Transcription regulation</keyword>
<protein>
    <recommendedName>
        <fullName>Mediator of RNA polymerase II transcription subunit 31</fullName>
    </recommendedName>
    <alternativeName>
        <fullName>Mediator complex subunit 31</fullName>
    </alternativeName>
</protein>
<name>MED31_COCIM</name>
<gene>
    <name type="primary">SOH1</name>
    <name type="synonym">MED31</name>
    <name type="ORF">CIMG_03717</name>
</gene>
<sequence length="152" mass="16992">MAQEAGLIPPPPHLSNPRFTLELEFVLSLANPYYISHLAVTYPHLLGISSQSTDNDDPSASSDAKAFAAYLAYLYDYWKRPEYVQFLTHPGATLRALRLLQEESFRKAVIRPQVIEALLGTTTEVDLHVESEEDREKNNEEQAEKGSNGATS</sequence>
<accession>Q1E146</accession>
<accession>J3KCA5</accession>
<comment type="function">
    <text evidence="1">Component of the Mediator complex, a coactivator involved in the regulated transcription of nearly all RNA polymerase II-dependent genes. Mediator functions as a bridge to convey information from gene-specific regulatory proteins to the basal RNA polymerase II transcription machinery. Mediator is recruited to promoters by direct interactions with regulatory proteins and serves as a scaffold for the assembly of a functional preinitiation complex with RNA polymerase II and the general transcription factors (By similarity).</text>
</comment>
<comment type="subunit">
    <text evidence="1">Component of the Mediator complex.</text>
</comment>
<comment type="subcellular location">
    <subcellularLocation>
        <location evidence="1">Nucleus</location>
    </subcellularLocation>
</comment>
<comment type="similarity">
    <text evidence="3">Belongs to the Mediator complex subunit 31 family.</text>
</comment>
<reference key="1">
    <citation type="journal article" date="2009" name="Genome Res.">
        <title>Comparative genomic analyses of the human fungal pathogens Coccidioides and their relatives.</title>
        <authorList>
            <person name="Sharpton T.J."/>
            <person name="Stajich J.E."/>
            <person name="Rounsley S.D."/>
            <person name="Gardner M.J."/>
            <person name="Wortman J.R."/>
            <person name="Jordar V.S."/>
            <person name="Maiti R."/>
            <person name="Kodira C.D."/>
            <person name="Neafsey D.E."/>
            <person name="Zeng Q."/>
            <person name="Hung C.-Y."/>
            <person name="McMahan C."/>
            <person name="Muszewska A."/>
            <person name="Grynberg M."/>
            <person name="Mandel M.A."/>
            <person name="Kellner E.M."/>
            <person name="Barker B.M."/>
            <person name="Galgiani J.N."/>
            <person name="Orbach M.J."/>
            <person name="Kirkland T.N."/>
            <person name="Cole G.T."/>
            <person name="Henn M.R."/>
            <person name="Birren B.W."/>
            <person name="Taylor J.W."/>
        </authorList>
    </citation>
    <scope>NUCLEOTIDE SEQUENCE [LARGE SCALE GENOMIC DNA]</scope>
    <source>
        <strain>RS</strain>
    </source>
</reference>
<reference key="2">
    <citation type="journal article" date="2010" name="Genome Res.">
        <title>Population genomic sequencing of Coccidioides fungi reveals recent hybridization and transposon control.</title>
        <authorList>
            <person name="Neafsey D.E."/>
            <person name="Barker B.M."/>
            <person name="Sharpton T.J."/>
            <person name="Stajich J.E."/>
            <person name="Park D.J."/>
            <person name="Whiston E."/>
            <person name="Hung C.-Y."/>
            <person name="McMahan C."/>
            <person name="White J."/>
            <person name="Sykes S."/>
            <person name="Heiman D."/>
            <person name="Young S."/>
            <person name="Zeng Q."/>
            <person name="Abouelleil A."/>
            <person name="Aftuck L."/>
            <person name="Bessette D."/>
            <person name="Brown A."/>
            <person name="FitzGerald M."/>
            <person name="Lui A."/>
            <person name="Macdonald J.P."/>
            <person name="Priest M."/>
            <person name="Orbach M.J."/>
            <person name="Galgiani J.N."/>
            <person name="Kirkland T.N."/>
            <person name="Cole G.T."/>
            <person name="Birren B.W."/>
            <person name="Henn M.R."/>
            <person name="Taylor J.W."/>
            <person name="Rounsley S.D."/>
        </authorList>
    </citation>
    <scope>GENOME REANNOTATION</scope>
    <source>
        <strain>RS</strain>
    </source>
</reference>
<evidence type="ECO:0000250" key="1"/>
<evidence type="ECO:0000256" key="2">
    <source>
        <dbReference type="SAM" id="MobiDB-lite"/>
    </source>
</evidence>
<evidence type="ECO:0000305" key="3"/>